<proteinExistence type="inferred from homology"/>
<feature type="chain" id="PRO_1000018850" description="Bifunctional purine biosynthesis protein PurH">
    <location>
        <begin position="1"/>
        <end position="538"/>
    </location>
</feature>
<feature type="domain" description="MGS-like" evidence="2">
    <location>
        <begin position="6"/>
        <end position="158"/>
    </location>
</feature>
<comment type="catalytic activity">
    <reaction evidence="1">
        <text>(6R)-10-formyltetrahydrofolate + 5-amino-1-(5-phospho-beta-D-ribosyl)imidazole-4-carboxamide = 5-formamido-1-(5-phospho-D-ribosyl)imidazole-4-carboxamide + (6S)-5,6,7,8-tetrahydrofolate</text>
        <dbReference type="Rhea" id="RHEA:22192"/>
        <dbReference type="ChEBI" id="CHEBI:57453"/>
        <dbReference type="ChEBI" id="CHEBI:58467"/>
        <dbReference type="ChEBI" id="CHEBI:58475"/>
        <dbReference type="ChEBI" id="CHEBI:195366"/>
        <dbReference type="EC" id="2.1.2.3"/>
    </reaction>
</comment>
<comment type="catalytic activity">
    <reaction evidence="1">
        <text>IMP + H2O = 5-formamido-1-(5-phospho-D-ribosyl)imidazole-4-carboxamide</text>
        <dbReference type="Rhea" id="RHEA:18445"/>
        <dbReference type="ChEBI" id="CHEBI:15377"/>
        <dbReference type="ChEBI" id="CHEBI:58053"/>
        <dbReference type="ChEBI" id="CHEBI:58467"/>
        <dbReference type="EC" id="3.5.4.10"/>
    </reaction>
</comment>
<comment type="pathway">
    <text evidence="1">Purine metabolism; IMP biosynthesis via de novo pathway; 5-formamido-1-(5-phospho-D-ribosyl)imidazole-4-carboxamide from 5-amino-1-(5-phospho-D-ribosyl)imidazole-4-carboxamide (10-formyl THF route): step 1/1.</text>
</comment>
<comment type="pathway">
    <text evidence="1">Purine metabolism; IMP biosynthesis via de novo pathway; IMP from 5-formamido-1-(5-phospho-D-ribosyl)imidazole-4-carboxamide: step 1/1.</text>
</comment>
<comment type="domain">
    <text evidence="1">The IMP cyclohydrolase activity resides in the N-terminal region.</text>
</comment>
<comment type="similarity">
    <text evidence="1">Belongs to the PurH family.</text>
</comment>
<reference key="1">
    <citation type="journal article" date="2009" name="PLoS ONE">
        <title>Genome degradation in Brucella ovis corresponds with narrowing of its host range and tissue tropism.</title>
        <authorList>
            <person name="Tsolis R.M."/>
            <person name="Seshadri R."/>
            <person name="Santos R.L."/>
            <person name="Sangari F.J."/>
            <person name="Lobo J.M."/>
            <person name="de Jong M.F."/>
            <person name="Ren Q."/>
            <person name="Myers G."/>
            <person name="Brinkac L.M."/>
            <person name="Nelson W.C."/>
            <person name="Deboy R.T."/>
            <person name="Angiuoli S."/>
            <person name="Khouri H."/>
            <person name="Dimitrov G."/>
            <person name="Robinson J.R."/>
            <person name="Mulligan S."/>
            <person name="Walker R.L."/>
            <person name="Elzer P.E."/>
            <person name="Hassan K.A."/>
            <person name="Paulsen I.T."/>
        </authorList>
    </citation>
    <scope>NUCLEOTIDE SEQUENCE [LARGE SCALE GENOMIC DNA]</scope>
    <source>
        <strain>ATCC 25840 / 63/290 / NCTC 10512</strain>
    </source>
</reference>
<sequence>MAVSSKHIPAPDLHRVRRALLSVSDKTGLIDFAKALHANGVEILSTGGTAKSIAAAGIPVKDVSEITGFPEIMDGRVKTLHPAVHGGLLAVRNDPEHVAAIEEHGIGGIDLAVINLYPFEEVRFKGGDYDTTVENIDIGGPAMIRASAKNHAYVATVVDPADYADVVAELEKHSGSLPLAFRKKLAAKAFSRTAAYDAAISNWFAEAIDEETPTYRAVAGKLHSVMRYGENPHQTAGFYLTGEKRPGVATATQLQGKQLSYNNINDTDAAFELVAEFDPARTAAVAIIKHANPCGVAEASTIKEAYLKALACDPVSAFGGIVALNRTLDEEAAEEIVKTFTEVIIAPDATEGAQAIVAAKKNLRLLVTGGLPDPRAKGIAAKTVAGGLLVQSRDNGVVDDLDLKVVTKRAPTEAELNDLKFAFRVGKHVKSNAIVYVKDGATVGIGAGQMSRVDSARIAARKAEDAAEAAGLAAPLTKGCVVASDAFFPFADGLLSAVEAGATAVIQPGGSMRDDEVIAAADEHGIAMVMTGMRHFRH</sequence>
<organism>
    <name type="scientific">Brucella ovis (strain ATCC 25840 / 63/290 / NCTC 10512)</name>
    <dbReference type="NCBI Taxonomy" id="444178"/>
    <lineage>
        <taxon>Bacteria</taxon>
        <taxon>Pseudomonadati</taxon>
        <taxon>Pseudomonadota</taxon>
        <taxon>Alphaproteobacteria</taxon>
        <taxon>Hyphomicrobiales</taxon>
        <taxon>Brucellaceae</taxon>
        <taxon>Brucella/Ochrobactrum group</taxon>
        <taxon>Brucella</taxon>
    </lineage>
</organism>
<gene>
    <name evidence="1" type="primary">purH</name>
    <name type="ordered locus">BOV_1749</name>
</gene>
<dbReference type="EC" id="2.1.2.3" evidence="1"/>
<dbReference type="EC" id="3.5.4.10" evidence="1"/>
<dbReference type="EMBL" id="CP000708">
    <property type="protein sequence ID" value="ABQ60597.1"/>
    <property type="molecule type" value="Genomic_DNA"/>
</dbReference>
<dbReference type="RefSeq" id="WP_006013786.1">
    <property type="nucleotide sequence ID" value="NC_009505.1"/>
</dbReference>
<dbReference type="SMR" id="A5VSF8"/>
<dbReference type="GeneID" id="45125099"/>
<dbReference type="KEGG" id="bov:BOV_1749"/>
<dbReference type="HOGENOM" id="CLU_016316_5_2_5"/>
<dbReference type="PhylomeDB" id="A5VSF8"/>
<dbReference type="UniPathway" id="UPA00074">
    <property type="reaction ID" value="UER00133"/>
</dbReference>
<dbReference type="UniPathway" id="UPA00074">
    <property type="reaction ID" value="UER00135"/>
</dbReference>
<dbReference type="PRO" id="PR:A5VSF8"/>
<dbReference type="Proteomes" id="UP000006383">
    <property type="component" value="Chromosome I"/>
</dbReference>
<dbReference type="GO" id="GO:0005829">
    <property type="term" value="C:cytosol"/>
    <property type="evidence" value="ECO:0007669"/>
    <property type="project" value="TreeGrafter"/>
</dbReference>
<dbReference type="GO" id="GO:0003937">
    <property type="term" value="F:IMP cyclohydrolase activity"/>
    <property type="evidence" value="ECO:0007669"/>
    <property type="project" value="UniProtKB-UniRule"/>
</dbReference>
<dbReference type="GO" id="GO:0004643">
    <property type="term" value="F:phosphoribosylaminoimidazolecarboxamide formyltransferase activity"/>
    <property type="evidence" value="ECO:0007669"/>
    <property type="project" value="UniProtKB-UniRule"/>
</dbReference>
<dbReference type="GO" id="GO:0006189">
    <property type="term" value="P:'de novo' IMP biosynthetic process"/>
    <property type="evidence" value="ECO:0007669"/>
    <property type="project" value="UniProtKB-UniRule"/>
</dbReference>
<dbReference type="CDD" id="cd01421">
    <property type="entry name" value="IMPCH"/>
    <property type="match status" value="1"/>
</dbReference>
<dbReference type="FunFam" id="3.40.140.20:FF:000001">
    <property type="entry name" value="Bifunctional purine biosynthesis protein PurH"/>
    <property type="match status" value="1"/>
</dbReference>
<dbReference type="FunFam" id="3.40.140.20:FF:000002">
    <property type="entry name" value="Bifunctional purine biosynthesis protein PurH"/>
    <property type="match status" value="1"/>
</dbReference>
<dbReference type="FunFam" id="3.40.50.1380:FF:000001">
    <property type="entry name" value="Bifunctional purine biosynthesis protein PurH"/>
    <property type="match status" value="1"/>
</dbReference>
<dbReference type="Gene3D" id="3.40.140.20">
    <property type="match status" value="2"/>
</dbReference>
<dbReference type="Gene3D" id="3.40.50.1380">
    <property type="entry name" value="Methylglyoxal synthase-like domain"/>
    <property type="match status" value="1"/>
</dbReference>
<dbReference type="HAMAP" id="MF_00139">
    <property type="entry name" value="PurH"/>
    <property type="match status" value="1"/>
</dbReference>
<dbReference type="InterPro" id="IPR024051">
    <property type="entry name" value="AICAR_Tfase_dup_dom_sf"/>
</dbReference>
<dbReference type="InterPro" id="IPR016193">
    <property type="entry name" value="Cytidine_deaminase-like"/>
</dbReference>
<dbReference type="InterPro" id="IPR011607">
    <property type="entry name" value="MGS-like_dom"/>
</dbReference>
<dbReference type="InterPro" id="IPR036914">
    <property type="entry name" value="MGS-like_dom_sf"/>
</dbReference>
<dbReference type="InterPro" id="IPR002695">
    <property type="entry name" value="PurH-like"/>
</dbReference>
<dbReference type="NCBIfam" id="NF002049">
    <property type="entry name" value="PRK00881.1"/>
    <property type="match status" value="1"/>
</dbReference>
<dbReference type="NCBIfam" id="TIGR00355">
    <property type="entry name" value="purH"/>
    <property type="match status" value="1"/>
</dbReference>
<dbReference type="PANTHER" id="PTHR11692:SF0">
    <property type="entry name" value="BIFUNCTIONAL PURINE BIOSYNTHESIS PROTEIN ATIC"/>
    <property type="match status" value="1"/>
</dbReference>
<dbReference type="PANTHER" id="PTHR11692">
    <property type="entry name" value="BIFUNCTIONAL PURINE BIOSYNTHESIS PROTEIN PURH"/>
    <property type="match status" value="1"/>
</dbReference>
<dbReference type="Pfam" id="PF01808">
    <property type="entry name" value="AICARFT_IMPCHas"/>
    <property type="match status" value="1"/>
</dbReference>
<dbReference type="Pfam" id="PF02142">
    <property type="entry name" value="MGS"/>
    <property type="match status" value="1"/>
</dbReference>
<dbReference type="PIRSF" id="PIRSF000414">
    <property type="entry name" value="AICARFT_IMPCHas"/>
    <property type="match status" value="1"/>
</dbReference>
<dbReference type="SMART" id="SM00798">
    <property type="entry name" value="AICARFT_IMPCHas"/>
    <property type="match status" value="1"/>
</dbReference>
<dbReference type="SMART" id="SM00851">
    <property type="entry name" value="MGS"/>
    <property type="match status" value="1"/>
</dbReference>
<dbReference type="SUPFAM" id="SSF53927">
    <property type="entry name" value="Cytidine deaminase-like"/>
    <property type="match status" value="1"/>
</dbReference>
<dbReference type="SUPFAM" id="SSF52335">
    <property type="entry name" value="Methylglyoxal synthase-like"/>
    <property type="match status" value="1"/>
</dbReference>
<dbReference type="PROSITE" id="PS51855">
    <property type="entry name" value="MGS"/>
    <property type="match status" value="1"/>
</dbReference>
<protein>
    <recommendedName>
        <fullName evidence="1">Bifunctional purine biosynthesis protein PurH</fullName>
    </recommendedName>
    <domain>
        <recommendedName>
            <fullName evidence="1">Phosphoribosylaminoimidazolecarboxamide formyltransferase</fullName>
            <ecNumber evidence="1">2.1.2.3</ecNumber>
        </recommendedName>
        <alternativeName>
            <fullName evidence="1">AICAR transformylase</fullName>
        </alternativeName>
    </domain>
    <domain>
        <recommendedName>
            <fullName evidence="1">IMP cyclohydrolase</fullName>
            <ecNumber evidence="1">3.5.4.10</ecNumber>
        </recommendedName>
        <alternativeName>
            <fullName evidence="1">ATIC</fullName>
        </alternativeName>
        <alternativeName>
            <fullName evidence="1">IMP synthase</fullName>
        </alternativeName>
        <alternativeName>
            <fullName evidence="1">Inosinicase</fullName>
        </alternativeName>
    </domain>
</protein>
<accession>A5VSF8</accession>
<keyword id="KW-0378">Hydrolase</keyword>
<keyword id="KW-0511">Multifunctional enzyme</keyword>
<keyword id="KW-0658">Purine biosynthesis</keyword>
<keyword id="KW-0808">Transferase</keyword>
<evidence type="ECO:0000255" key="1">
    <source>
        <dbReference type="HAMAP-Rule" id="MF_00139"/>
    </source>
</evidence>
<evidence type="ECO:0000255" key="2">
    <source>
        <dbReference type="PROSITE-ProRule" id="PRU01202"/>
    </source>
</evidence>
<name>PUR9_BRUO2</name>